<protein>
    <recommendedName>
        <fullName evidence="1">Large ribosomal subunit protein uL10</fullName>
    </recommendedName>
    <alternativeName>
        <fullName evidence="2">50S ribosomal protein L10</fullName>
    </alternativeName>
</protein>
<feature type="chain" id="PRO_1000005541" description="Large ribosomal subunit protein uL10">
    <location>
        <begin position="1"/>
        <end position="179"/>
    </location>
</feature>
<proteinExistence type="inferred from homology"/>
<reference key="1">
    <citation type="submission" date="2006-12" db="EMBL/GenBank/DDBJ databases">
        <title>Complete sequence of Mycobacterium vanbaalenii PYR-1.</title>
        <authorList>
            <consortium name="US DOE Joint Genome Institute"/>
            <person name="Copeland A."/>
            <person name="Lucas S."/>
            <person name="Lapidus A."/>
            <person name="Barry K."/>
            <person name="Detter J.C."/>
            <person name="Glavina del Rio T."/>
            <person name="Hammon N."/>
            <person name="Israni S."/>
            <person name="Dalin E."/>
            <person name="Tice H."/>
            <person name="Pitluck S."/>
            <person name="Singan V."/>
            <person name="Schmutz J."/>
            <person name="Larimer F."/>
            <person name="Land M."/>
            <person name="Hauser L."/>
            <person name="Kyrpides N."/>
            <person name="Anderson I.J."/>
            <person name="Miller C."/>
            <person name="Richardson P."/>
        </authorList>
    </citation>
    <scope>NUCLEOTIDE SEQUENCE [LARGE SCALE GENOMIC DNA]</scope>
    <source>
        <strain>DSM 7251 / JCM 13017 / BCRC 16820 / KCTC 9966 / NRRL B-24157 / PYR-1</strain>
    </source>
</reference>
<accession>A1T4I7</accession>
<sequence>MAKADKATAVAEIAEKFKEATAAVVTEYRGLTVSNLAELRRSLGNSTTYTVAKNTLVKRAAVEAGVEGLDDMFAGPTAIAFINGEPVDAAKAIKKFAKDNKALIVKGGYMDGRALTVGEVERIADLESREVLLSKLAGAMKAKQSQAAALFVAPASQVARLAAALQEKKAAGDSAESAA</sequence>
<keyword id="KW-0687">Ribonucleoprotein</keyword>
<keyword id="KW-0689">Ribosomal protein</keyword>
<keyword id="KW-0694">RNA-binding</keyword>
<keyword id="KW-0699">rRNA-binding</keyword>
<gene>
    <name evidence="1" type="primary">rplJ</name>
    <name type="ordered locus">Mvan_1252</name>
</gene>
<organism>
    <name type="scientific">Mycolicibacterium vanbaalenii (strain DSM 7251 / JCM 13017 / BCRC 16820 / KCTC 9966 / NRRL B-24157 / PYR-1)</name>
    <name type="common">Mycobacterium vanbaalenii</name>
    <dbReference type="NCBI Taxonomy" id="350058"/>
    <lineage>
        <taxon>Bacteria</taxon>
        <taxon>Bacillati</taxon>
        <taxon>Actinomycetota</taxon>
        <taxon>Actinomycetes</taxon>
        <taxon>Mycobacteriales</taxon>
        <taxon>Mycobacteriaceae</taxon>
        <taxon>Mycolicibacterium</taxon>
    </lineage>
</organism>
<name>RL10_MYCVP</name>
<evidence type="ECO:0000255" key="1">
    <source>
        <dbReference type="HAMAP-Rule" id="MF_00362"/>
    </source>
</evidence>
<evidence type="ECO:0000305" key="2"/>
<dbReference type="EMBL" id="CP000511">
    <property type="protein sequence ID" value="ABM12087.1"/>
    <property type="molecule type" value="Genomic_DNA"/>
</dbReference>
<dbReference type="RefSeq" id="WP_011778520.1">
    <property type="nucleotide sequence ID" value="NZ_JACKSD010000070.1"/>
</dbReference>
<dbReference type="SMR" id="A1T4I7"/>
<dbReference type="STRING" id="350058.Mvan_1252"/>
<dbReference type="KEGG" id="mva:Mvan_1252"/>
<dbReference type="eggNOG" id="COG0244">
    <property type="taxonomic scope" value="Bacteria"/>
</dbReference>
<dbReference type="HOGENOM" id="CLU_092227_1_0_11"/>
<dbReference type="Proteomes" id="UP000009159">
    <property type="component" value="Chromosome"/>
</dbReference>
<dbReference type="GO" id="GO:0015934">
    <property type="term" value="C:large ribosomal subunit"/>
    <property type="evidence" value="ECO:0007669"/>
    <property type="project" value="InterPro"/>
</dbReference>
<dbReference type="GO" id="GO:0070180">
    <property type="term" value="F:large ribosomal subunit rRNA binding"/>
    <property type="evidence" value="ECO:0007669"/>
    <property type="project" value="UniProtKB-UniRule"/>
</dbReference>
<dbReference type="GO" id="GO:0003735">
    <property type="term" value="F:structural constituent of ribosome"/>
    <property type="evidence" value="ECO:0007669"/>
    <property type="project" value="InterPro"/>
</dbReference>
<dbReference type="GO" id="GO:0006412">
    <property type="term" value="P:translation"/>
    <property type="evidence" value="ECO:0007669"/>
    <property type="project" value="UniProtKB-UniRule"/>
</dbReference>
<dbReference type="CDD" id="cd05797">
    <property type="entry name" value="Ribosomal_L10"/>
    <property type="match status" value="1"/>
</dbReference>
<dbReference type="Gene3D" id="3.30.70.1730">
    <property type="match status" value="1"/>
</dbReference>
<dbReference type="HAMAP" id="MF_00362">
    <property type="entry name" value="Ribosomal_uL10"/>
    <property type="match status" value="1"/>
</dbReference>
<dbReference type="InterPro" id="IPR001790">
    <property type="entry name" value="Ribosomal_uL10"/>
</dbReference>
<dbReference type="InterPro" id="IPR043141">
    <property type="entry name" value="Ribosomal_uL10-like_sf"/>
</dbReference>
<dbReference type="InterPro" id="IPR022973">
    <property type="entry name" value="Ribosomal_uL10_bac"/>
</dbReference>
<dbReference type="InterPro" id="IPR047865">
    <property type="entry name" value="Ribosomal_uL10_bac_type"/>
</dbReference>
<dbReference type="InterPro" id="IPR002363">
    <property type="entry name" value="Ribosomal_uL10_CS_bac"/>
</dbReference>
<dbReference type="NCBIfam" id="NF000955">
    <property type="entry name" value="PRK00099.1-1"/>
    <property type="match status" value="1"/>
</dbReference>
<dbReference type="PANTHER" id="PTHR11560">
    <property type="entry name" value="39S RIBOSOMAL PROTEIN L10, MITOCHONDRIAL"/>
    <property type="match status" value="1"/>
</dbReference>
<dbReference type="Pfam" id="PF00466">
    <property type="entry name" value="Ribosomal_L10"/>
    <property type="match status" value="1"/>
</dbReference>
<dbReference type="SUPFAM" id="SSF160369">
    <property type="entry name" value="Ribosomal protein L10-like"/>
    <property type="match status" value="1"/>
</dbReference>
<dbReference type="PROSITE" id="PS01109">
    <property type="entry name" value="RIBOSOMAL_L10"/>
    <property type="match status" value="1"/>
</dbReference>
<comment type="function">
    <text evidence="1">Forms part of the ribosomal stalk, playing a central role in the interaction of the ribosome with GTP-bound translation factors.</text>
</comment>
<comment type="subunit">
    <text evidence="1">Part of the ribosomal stalk of the 50S ribosomal subunit. The N-terminus interacts with L11 and the large rRNA to form the base of the stalk. The C-terminus forms an elongated spine to which L12 dimers bind in a sequential fashion forming a multimeric L10(L12)X complex.</text>
</comment>
<comment type="similarity">
    <text evidence="1">Belongs to the universal ribosomal protein uL10 family.</text>
</comment>